<name>U661_DORVU</name>
<protein>
    <recommendedName>
        <fullName evidence="2">U-limacoditoxin(6)-Dv61</fullName>
        <shortName evidence="2">U-LCTX(6)-Dv61</shortName>
    </recommendedName>
    <alternativeName>
        <fullName evidence="2">Vulnericin</fullName>
    </alternativeName>
</protein>
<evidence type="ECO:0000269" key="1">
    <source>
    </source>
</evidence>
<evidence type="ECO:0000303" key="2">
    <source>
    </source>
</evidence>
<evidence type="ECO:0000305" key="3"/>
<evidence type="ECO:0000305" key="4">
    <source>
    </source>
</evidence>
<proteinExistence type="evidence at protein level"/>
<dbReference type="GO" id="GO:0005576">
    <property type="term" value="C:extracellular region"/>
    <property type="evidence" value="ECO:0007669"/>
    <property type="project" value="UniProtKB-SubCell"/>
</dbReference>
<dbReference type="GO" id="GO:0090729">
    <property type="term" value="F:toxin activity"/>
    <property type="evidence" value="ECO:0007669"/>
    <property type="project" value="UniProtKB-KW"/>
</dbReference>
<keyword id="KW-0903">Direct protein sequencing</keyword>
<keyword id="KW-0964">Secreted</keyword>
<keyword id="KW-0732">Signal</keyword>
<keyword id="KW-0800">Toxin</keyword>
<organism>
    <name type="scientific">Doratifera vulnerans</name>
    <name type="common">Mottled cup moth</name>
    <dbReference type="NCBI Taxonomy" id="1372962"/>
    <lineage>
        <taxon>Eukaryota</taxon>
        <taxon>Metazoa</taxon>
        <taxon>Ecdysozoa</taxon>
        <taxon>Arthropoda</taxon>
        <taxon>Hexapoda</taxon>
        <taxon>Insecta</taxon>
        <taxon>Pterygota</taxon>
        <taxon>Neoptera</taxon>
        <taxon>Endopterygota</taxon>
        <taxon>Lepidoptera</taxon>
        <taxon>Glossata</taxon>
        <taxon>Ditrysia</taxon>
        <taxon>Zygaenoidea</taxon>
        <taxon>Limacodidae</taxon>
        <taxon>Doratifera</taxon>
    </lineage>
</organism>
<feature type="signal peptide" evidence="1">
    <location>
        <begin position="1"/>
        <end position="19"/>
    </location>
</feature>
<feature type="peptide" id="PRO_0000453406" description="U-limacoditoxin(6)-Dv61" evidence="1">
    <location>
        <begin position="20"/>
        <end position="46"/>
    </location>
</feature>
<reference key="1">
    <citation type="journal article" date="2021" name="Proc. Natl. Acad. Sci. U.S.A.">
        <title>Production, composition, and mode of action of the painful defensive venom produced by a limacodid caterpillar, Doratifera vulnerans.</title>
        <authorList>
            <person name="Walker A.A."/>
            <person name="Robinson S.D."/>
            <person name="Paluzzi J.V."/>
            <person name="Merritt D.J."/>
            <person name="Nixon S.A."/>
            <person name="Schroeder C.I."/>
            <person name="Jin J."/>
            <person name="Goudarzi M.H."/>
            <person name="Kotze A.C."/>
            <person name="Dekan Z."/>
            <person name="Sombke A."/>
            <person name="Alewood P.F."/>
            <person name="Fry B.G."/>
            <person name="Epstein M.E."/>
            <person name="Vetter I."/>
            <person name="King G.F."/>
        </authorList>
    </citation>
    <scope>NUCLEOTIDE SEQUENCE [MRNA]</scope>
    <scope>PROTEIN SEQUENCE OF 20-46</scope>
    <scope>FUNCTION</scope>
    <scope>SUBCELLULAR LOCATION</scope>
    <scope>IDENTIFICATION BY MASS SPECTROMETRY</scope>
    <source>
        <tissue>Venom</tissue>
    </source>
</reference>
<accession>P0DUT0</accession>
<sequence>MSKLLVLLMTTALATLAQAISFDCSDKPPECQNDPGCCFDIGITTF</sequence>
<comment type="function">
    <text evidence="1">Probable toxin. Does not show insecticidal, antimicrobial and antiparasitic activities. Does not induce increase in intracellular calcium in mouse DRG neurons, suggesting that it does not induce pain.</text>
</comment>
<comment type="subcellular location">
    <subcellularLocation>
        <location evidence="1">Secreted</location>
    </subcellularLocation>
</comment>
<comment type="tissue specificity">
    <text evidence="4">Expressed by the venom secretory cell of the spine. The spine is a cuticular structure containing a single large nucleated venom-secreting cell at its base. It is an independent unit capable of producing, storing and injecting venom. On the back of D.vulnerans caterpillars, spines are grouped together by 50 to 100 to form scoli, of which there are eight in D.vulnerans.</text>
</comment>
<comment type="developmental stage">
    <text evidence="1">Only secreted by larvae. Adult moth do not have spines.</text>
</comment>
<comment type="similarity">
    <text evidence="3">Belongs to the limacoditoxin-6 family.</text>
</comment>